<accession>Q5YJX3</accession>
<evidence type="ECO:0000255" key="1">
    <source>
        <dbReference type="HAMAP-Rule" id="MF_01390"/>
    </source>
</evidence>
<feature type="chain" id="PRO_0000143412" description="Maturase K">
    <location>
        <begin position="1"/>
        <end position="499"/>
    </location>
</feature>
<gene>
    <name evidence="1" type="primary">matK</name>
</gene>
<geneLocation type="chloroplast"/>
<comment type="function">
    <text evidence="1">Usually encoded in the trnK tRNA gene intron. Probably assists in splicing its own and other chloroplast group II introns.</text>
</comment>
<comment type="subcellular location">
    <subcellularLocation>
        <location>Plastid</location>
        <location>Chloroplast</location>
    </subcellularLocation>
</comment>
<comment type="similarity">
    <text evidence="1">Belongs to the intron maturase 2 family. MatK subfamily.</text>
</comment>
<keyword id="KW-0150">Chloroplast</keyword>
<keyword id="KW-0507">mRNA processing</keyword>
<keyword id="KW-0934">Plastid</keyword>
<keyword id="KW-0694">RNA-binding</keyword>
<keyword id="KW-0819">tRNA processing</keyword>
<sequence length="499" mass="60064">MKEFQVYLELDRSLQHDFLYPLIFREYIYALAYDHGLNNSILVENLGYDNKSSLLIVKRLITRMYQQKHLILSANDSNKNQFWGYNKNLYSQIISEGFAVSVEIPFSLQLISSLEEAEIVKSYNLRSIHSIFPFFEEKFPYLNYVSDVRIPYPIHLEILVQTLRYWVKDASSFHLLRLFLYEYCNWNSLITPKKWISTFSKSNPRLFLFLYNFYVCEYESILIFLRNKSSYLRLTSSGVLFERIYFYAKIEHRVEVFDKDFPSTLWFFKDPFIHYVRYQGKSILSSKNTPFFMNKWKYYLIHLWQCHFYVWSQPGKIHINQLSEHSFYFLGYFSNVRLNPSVVRSQMLENSFIIENVMKKLDTIIPIIPLIRSLAKAKFCNVLGHPISKPVWADSSDFYIIDRFLRICRNLSHYYNGSSNKKSLYRIKYILRLSCIKTLARKHKSTVRVFLKRLGSKFLEEFFTEEEEILSLILPRASFTLQRLYRGRIWYLDIFYFHQ</sequence>
<organism>
    <name type="scientific">Gymnocladus dioicus</name>
    <name type="common">Kentucky coffee tree</name>
    <name type="synonym">Guilandina dioica</name>
    <dbReference type="NCBI Taxonomy" id="53883"/>
    <lineage>
        <taxon>Eukaryota</taxon>
        <taxon>Viridiplantae</taxon>
        <taxon>Streptophyta</taxon>
        <taxon>Embryophyta</taxon>
        <taxon>Tracheophyta</taxon>
        <taxon>Spermatophyta</taxon>
        <taxon>Magnoliopsida</taxon>
        <taxon>eudicotyledons</taxon>
        <taxon>Gunneridae</taxon>
        <taxon>Pentapetalae</taxon>
        <taxon>rosids</taxon>
        <taxon>fabids</taxon>
        <taxon>Fabales</taxon>
        <taxon>Fabaceae</taxon>
        <taxon>Caesalpinioideae</taxon>
        <taxon>Umtiza clade</taxon>
        <taxon>Gymnocladus</taxon>
    </lineage>
</organism>
<name>MATK_GYMDI</name>
<proteinExistence type="inferred from homology"/>
<reference key="1">
    <citation type="journal article" date="2004" name="Am. J. Bot.">
        <title>A phylogeny of legumes (Leguminosae) based on analysis of the plastid matK gene resolves many well-supported subclades within the family.</title>
        <authorList>
            <person name="Wojciechowski M.F."/>
            <person name="Lavin M."/>
            <person name="Sanderson M.J."/>
        </authorList>
        <dbReference type="AGRICOLA" id="IND43661289"/>
    </citation>
    <scope>NUCLEOTIDE SEQUENCE [GENOMIC DNA]</scope>
</reference>
<protein>
    <recommendedName>
        <fullName evidence="1">Maturase K</fullName>
    </recommendedName>
    <alternativeName>
        <fullName evidence="1">Intron maturase</fullName>
    </alternativeName>
</protein>
<dbReference type="EMBL" id="AY386929">
    <property type="protein sequence ID" value="AAQ92007.1"/>
    <property type="molecule type" value="Genomic_DNA"/>
</dbReference>
<dbReference type="GO" id="GO:0009507">
    <property type="term" value="C:chloroplast"/>
    <property type="evidence" value="ECO:0007669"/>
    <property type="project" value="UniProtKB-SubCell"/>
</dbReference>
<dbReference type="GO" id="GO:0003723">
    <property type="term" value="F:RNA binding"/>
    <property type="evidence" value="ECO:0007669"/>
    <property type="project" value="UniProtKB-KW"/>
</dbReference>
<dbReference type="GO" id="GO:0006397">
    <property type="term" value="P:mRNA processing"/>
    <property type="evidence" value="ECO:0007669"/>
    <property type="project" value="UniProtKB-KW"/>
</dbReference>
<dbReference type="GO" id="GO:0008380">
    <property type="term" value="P:RNA splicing"/>
    <property type="evidence" value="ECO:0007669"/>
    <property type="project" value="UniProtKB-UniRule"/>
</dbReference>
<dbReference type="GO" id="GO:0008033">
    <property type="term" value="P:tRNA processing"/>
    <property type="evidence" value="ECO:0007669"/>
    <property type="project" value="UniProtKB-KW"/>
</dbReference>
<dbReference type="HAMAP" id="MF_01390">
    <property type="entry name" value="MatK"/>
    <property type="match status" value="1"/>
</dbReference>
<dbReference type="InterPro" id="IPR024937">
    <property type="entry name" value="Domain_X"/>
</dbReference>
<dbReference type="InterPro" id="IPR002866">
    <property type="entry name" value="Maturase_MatK"/>
</dbReference>
<dbReference type="InterPro" id="IPR024942">
    <property type="entry name" value="Maturase_MatK_N"/>
</dbReference>
<dbReference type="PANTHER" id="PTHR34811">
    <property type="entry name" value="MATURASE K"/>
    <property type="match status" value="1"/>
</dbReference>
<dbReference type="PANTHER" id="PTHR34811:SF1">
    <property type="entry name" value="MATURASE K"/>
    <property type="match status" value="1"/>
</dbReference>
<dbReference type="Pfam" id="PF01348">
    <property type="entry name" value="Intron_maturas2"/>
    <property type="match status" value="1"/>
</dbReference>
<dbReference type="Pfam" id="PF01824">
    <property type="entry name" value="MatK_N"/>
    <property type="match status" value="1"/>
</dbReference>